<feature type="chain" id="PRO_0000266662" description="Small ribosomal subunit protein bS21">
    <location>
        <begin position="1"/>
        <end position="64"/>
    </location>
</feature>
<feature type="region of interest" description="Disordered" evidence="2">
    <location>
        <begin position="26"/>
        <end position="64"/>
    </location>
</feature>
<feature type="compositionally biased region" description="Basic residues" evidence="2">
    <location>
        <begin position="43"/>
        <end position="64"/>
    </location>
</feature>
<dbReference type="EMBL" id="CP000027">
    <property type="protein sequence ID" value="AAW40395.1"/>
    <property type="molecule type" value="Genomic_DNA"/>
</dbReference>
<dbReference type="RefSeq" id="WP_010936130.1">
    <property type="nucleotide sequence ID" value="NC_002936.3"/>
</dbReference>
<dbReference type="SMR" id="Q3Z9K2"/>
<dbReference type="FunCoup" id="Q3Z9K2">
    <property type="interactions" value="189"/>
</dbReference>
<dbReference type="STRING" id="243164.DET0350"/>
<dbReference type="GeneID" id="3230359"/>
<dbReference type="KEGG" id="det:DET0350"/>
<dbReference type="eggNOG" id="COG0828">
    <property type="taxonomic scope" value="Bacteria"/>
</dbReference>
<dbReference type="HOGENOM" id="CLU_159258_1_2_0"/>
<dbReference type="InParanoid" id="Q3Z9K2"/>
<dbReference type="Proteomes" id="UP000008289">
    <property type="component" value="Chromosome"/>
</dbReference>
<dbReference type="GO" id="GO:1990904">
    <property type="term" value="C:ribonucleoprotein complex"/>
    <property type="evidence" value="ECO:0007669"/>
    <property type="project" value="UniProtKB-KW"/>
</dbReference>
<dbReference type="GO" id="GO:0005840">
    <property type="term" value="C:ribosome"/>
    <property type="evidence" value="ECO:0007669"/>
    <property type="project" value="UniProtKB-KW"/>
</dbReference>
<dbReference type="GO" id="GO:0003735">
    <property type="term" value="F:structural constituent of ribosome"/>
    <property type="evidence" value="ECO:0007669"/>
    <property type="project" value="InterPro"/>
</dbReference>
<dbReference type="GO" id="GO:0006412">
    <property type="term" value="P:translation"/>
    <property type="evidence" value="ECO:0007669"/>
    <property type="project" value="UniProtKB-UniRule"/>
</dbReference>
<dbReference type="Gene3D" id="1.20.5.1150">
    <property type="entry name" value="Ribosomal protein S8"/>
    <property type="match status" value="1"/>
</dbReference>
<dbReference type="HAMAP" id="MF_00358">
    <property type="entry name" value="Ribosomal_bS21"/>
    <property type="match status" value="1"/>
</dbReference>
<dbReference type="InterPro" id="IPR001911">
    <property type="entry name" value="Ribosomal_bS21"/>
</dbReference>
<dbReference type="InterPro" id="IPR038380">
    <property type="entry name" value="Ribosomal_bS21_sf"/>
</dbReference>
<dbReference type="NCBIfam" id="TIGR00030">
    <property type="entry name" value="S21p"/>
    <property type="match status" value="1"/>
</dbReference>
<dbReference type="Pfam" id="PF01165">
    <property type="entry name" value="Ribosomal_S21"/>
    <property type="match status" value="1"/>
</dbReference>
<dbReference type="PRINTS" id="PR00976">
    <property type="entry name" value="RIBOSOMALS21"/>
</dbReference>
<sequence length="64" mass="7641">MADVRPENNESFESMLKRFNRKVQQDGILSEARRRTRFERPPTRRKRKDAAKRRLAIKAARKAT</sequence>
<gene>
    <name evidence="1" type="primary">rpsU</name>
    <name type="ordered locus">DET0350</name>
</gene>
<reference key="1">
    <citation type="journal article" date="2005" name="Science">
        <title>Genome sequence of the PCE-dechlorinating bacterium Dehalococcoides ethenogenes.</title>
        <authorList>
            <person name="Seshadri R."/>
            <person name="Adrian L."/>
            <person name="Fouts D.E."/>
            <person name="Eisen J.A."/>
            <person name="Phillippy A.M."/>
            <person name="Methe B.A."/>
            <person name="Ward N.L."/>
            <person name="Nelson W.C."/>
            <person name="DeBoy R.T."/>
            <person name="Khouri H.M."/>
            <person name="Kolonay J.F."/>
            <person name="Dodson R.J."/>
            <person name="Daugherty S.C."/>
            <person name="Brinkac L.M."/>
            <person name="Sullivan S.A."/>
            <person name="Madupu R."/>
            <person name="Nelson K.E."/>
            <person name="Kang K.H."/>
            <person name="Impraim M."/>
            <person name="Tran K."/>
            <person name="Robinson J.M."/>
            <person name="Forberger H.A."/>
            <person name="Fraser C.M."/>
            <person name="Zinder S.H."/>
            <person name="Heidelberg J.F."/>
        </authorList>
    </citation>
    <scope>NUCLEOTIDE SEQUENCE [LARGE SCALE GENOMIC DNA]</scope>
    <source>
        <strain>ATCC BAA-2266 / KCTC 15142 / 195</strain>
    </source>
</reference>
<protein>
    <recommendedName>
        <fullName evidence="1">Small ribosomal subunit protein bS21</fullName>
    </recommendedName>
    <alternativeName>
        <fullName evidence="3">30S ribosomal protein S21</fullName>
    </alternativeName>
</protein>
<proteinExistence type="inferred from homology"/>
<accession>Q3Z9K2</accession>
<organism>
    <name type="scientific">Dehalococcoides mccartyi (strain ATCC BAA-2266 / KCTC 15142 / 195)</name>
    <name type="common">Dehalococcoides ethenogenes (strain 195)</name>
    <dbReference type="NCBI Taxonomy" id="243164"/>
    <lineage>
        <taxon>Bacteria</taxon>
        <taxon>Bacillati</taxon>
        <taxon>Chloroflexota</taxon>
        <taxon>Dehalococcoidia</taxon>
        <taxon>Dehalococcoidales</taxon>
        <taxon>Dehalococcoidaceae</taxon>
        <taxon>Dehalococcoides</taxon>
    </lineage>
</organism>
<comment type="similarity">
    <text evidence="1">Belongs to the bacterial ribosomal protein bS21 family.</text>
</comment>
<evidence type="ECO:0000255" key="1">
    <source>
        <dbReference type="HAMAP-Rule" id="MF_00358"/>
    </source>
</evidence>
<evidence type="ECO:0000256" key="2">
    <source>
        <dbReference type="SAM" id="MobiDB-lite"/>
    </source>
</evidence>
<evidence type="ECO:0000305" key="3"/>
<name>RS21_DEHM1</name>
<keyword id="KW-0687">Ribonucleoprotein</keyword>
<keyword id="KW-0689">Ribosomal protein</keyword>